<name>ENCR_TRYB2</name>
<gene>
    <name evidence="4" type="primary">ENCR</name>
    <name evidence="7" type="ORF">Tb03.30P12.550</name>
    <name evidence="6" type="ORF">Tb927.3.1840</name>
</gene>
<reference evidence="7" key="1">
    <citation type="journal article" date="2005" name="Science">
        <title>Comparative genomics of trypanosomatid parasitic protozoa.</title>
        <authorList>
            <person name="El-Sayed N.M."/>
            <person name="Myler P.J."/>
            <person name="Blandin G."/>
            <person name="Berriman M."/>
            <person name="Crabtree J."/>
            <person name="Aggarwal G."/>
            <person name="Caler E."/>
            <person name="Renauld H."/>
            <person name="Worthey E.A."/>
            <person name="Hertz-Fowler C."/>
            <person name="Ghedin E."/>
            <person name="Peacock C."/>
            <person name="Bartholomeu D.C."/>
            <person name="Haas B.J."/>
            <person name="Tran A.N."/>
            <person name="Wortman J.R."/>
            <person name="Alsmark U.C."/>
            <person name="Angiuoli S."/>
            <person name="Anupama A."/>
            <person name="Badger J."/>
            <person name="Bringaud F."/>
            <person name="Cadag E."/>
            <person name="Carlton J.M."/>
            <person name="Cerqueira G.C."/>
            <person name="Creasy T."/>
            <person name="Delcher A.L."/>
            <person name="Djikeng A."/>
            <person name="Embley T.M."/>
            <person name="Hauser C."/>
            <person name="Ivens A.C."/>
            <person name="Kummerfeld S.K."/>
            <person name="Pereira-Leal J.B."/>
            <person name="Nilsson D."/>
            <person name="Peterson J."/>
            <person name="Salzberg S.L."/>
            <person name="Shallom J."/>
            <person name="Silva J.C."/>
            <person name="Sundaram J."/>
            <person name="Westenberger S."/>
            <person name="White O."/>
            <person name="Melville S.E."/>
            <person name="Donelson J.E."/>
            <person name="Andersson B."/>
            <person name="Stuart K.D."/>
            <person name="Hall N."/>
        </authorList>
    </citation>
    <scope>NUCLEOTIDE SEQUENCE [LARGE SCALE GENOMIC DNA]</scope>
    <source>
        <strain evidence="7">927/4 GUTat10.1</strain>
    </source>
</reference>
<reference evidence="8" key="2">
    <citation type="journal article" date="2005" name="Science">
        <title>The genome of the African trypanosome Trypanosoma brucei.</title>
        <authorList>
            <person name="Berriman M."/>
            <person name="Ghedin E."/>
            <person name="Hertz-Fowler C."/>
            <person name="Blandin G."/>
            <person name="Renauld H."/>
            <person name="Bartholomeu D.C."/>
            <person name="Lennard N.J."/>
            <person name="Caler E."/>
            <person name="Hamlin N.E."/>
            <person name="Haas B."/>
            <person name="Bohme U."/>
            <person name="Hannick L."/>
            <person name="Aslett M.A."/>
            <person name="Shallom J."/>
            <person name="Marcello L."/>
            <person name="Hou L."/>
            <person name="Wickstead B."/>
            <person name="Alsmark U.C.M."/>
            <person name="Arrowsmith C."/>
            <person name="Atkin R.J."/>
            <person name="Barron A.J."/>
            <person name="Bringaud F."/>
            <person name="Brooks K."/>
            <person name="Carrington M."/>
            <person name="Cherevach I."/>
            <person name="Chillingworth T.J."/>
            <person name="Churcher C."/>
            <person name="Clark L.N."/>
            <person name="Corton C.H."/>
            <person name="Cronin A."/>
            <person name="Davies R.M."/>
            <person name="Doggett J."/>
            <person name="Djikeng A."/>
            <person name="Feldblyum T."/>
            <person name="Field M.C."/>
            <person name="Fraser A."/>
            <person name="Goodhead I."/>
            <person name="Hance Z."/>
            <person name="Harper D."/>
            <person name="Harris B.R."/>
            <person name="Hauser H."/>
            <person name="Hostetler J."/>
            <person name="Ivens A."/>
            <person name="Jagels K."/>
            <person name="Johnson D."/>
            <person name="Johnson J."/>
            <person name="Jones K."/>
            <person name="Kerhornou A.X."/>
            <person name="Koo H."/>
            <person name="Larke N."/>
            <person name="Landfear S."/>
            <person name="Larkin C."/>
            <person name="Leech V."/>
            <person name="Line A."/>
            <person name="Lord A."/>
            <person name="Macleod A."/>
            <person name="Mooney P.J."/>
            <person name="Moule S."/>
            <person name="Martin D.M."/>
            <person name="Morgan G.W."/>
            <person name="Mungall K."/>
            <person name="Norbertczak H."/>
            <person name="Ormond D."/>
            <person name="Pai G."/>
            <person name="Peacock C.S."/>
            <person name="Peterson J."/>
            <person name="Quail M.A."/>
            <person name="Rabbinowitsch E."/>
            <person name="Rajandream M.A."/>
            <person name="Reitter C."/>
            <person name="Salzberg S.L."/>
            <person name="Sanders M."/>
            <person name="Schobel S."/>
            <person name="Sharp S."/>
            <person name="Simmonds M."/>
            <person name="Simpson A.J."/>
            <person name="Tallon L."/>
            <person name="Turner C.M."/>
            <person name="Tait A."/>
            <person name="Tivey A.R."/>
            <person name="Van Aken S."/>
            <person name="Walker D."/>
            <person name="Wanless D."/>
            <person name="Wang S."/>
            <person name="White B."/>
            <person name="White O."/>
            <person name="Whitehead S."/>
            <person name="Woodward J."/>
            <person name="Wortman J."/>
            <person name="Adams M.D."/>
            <person name="Embley T.M."/>
            <person name="Gull K."/>
            <person name="Ullu E."/>
            <person name="Barry J.D."/>
            <person name="Fairlamb A.H."/>
            <person name="Opperdoes F."/>
            <person name="Barrell B.G."/>
            <person name="Donelson J.E."/>
            <person name="Hall N."/>
            <person name="Fraser C.M."/>
            <person name="Melville S.E."/>
            <person name="El-Sayed N.M.A."/>
        </authorList>
    </citation>
    <scope>NUCLEOTIDE SEQUENCE [LARGE SCALE GENOMIC DNA]</scope>
    <source>
        <strain evidence="8">927/4 GUTat10.1</strain>
    </source>
</reference>
<reference evidence="5" key="3">
    <citation type="journal article" date="2006" name="Cell">
        <title>Fatty acid synthesis by elongases in trypanosomes.</title>
        <authorList>
            <person name="Lee S.H."/>
            <person name="Stephens J.L."/>
            <person name="Paul K.S."/>
            <person name="Englund P.T."/>
        </authorList>
    </citation>
    <scope>FUNCTION</scope>
    <scope>PATHWAY</scope>
    <scope>DISRUPTION PHENOTYPE</scope>
</reference>
<feature type="chain" id="PRO_0000459374" description="Putative enoyl-CoA reductase">
    <location>
        <begin position="1"/>
        <end position="298"/>
    </location>
</feature>
<feature type="transmembrane region" description="Helical" evidence="2">
    <location>
        <begin position="162"/>
        <end position="182"/>
    </location>
</feature>
<feature type="transmembrane region" description="Helical" evidence="2">
    <location>
        <begin position="189"/>
        <end position="209"/>
    </location>
</feature>
<feature type="transmembrane region" description="Helical" evidence="2">
    <location>
        <begin position="229"/>
        <end position="249"/>
    </location>
</feature>
<feature type="transmembrane region" description="Helical" evidence="2">
    <location>
        <begin position="254"/>
        <end position="274"/>
    </location>
</feature>
<accession>Q57ZC7</accession>
<accession>D6XD92</accession>
<sequence length="298" mass="33355">MKVTVISGSSSEVVELPSNAGLTDLKKVYKPRVDIHRKSFKILRSGGDKNDKSAYITLDAKRALTEQGVKDGSEVVYKDLGPQVGYRTVFVVEYAGPLAIMLAYAARPSFIYGSSIVKEYCYTQKLYIALFCAHFIKRELETFFVHKFSHPTMPRRNIIKNCVYYWTFALGIGYALCSPYYTEPASPTLVNASAVAMVIFELLNFAVHVQLSGMRKGDGDATRPVPKGILFSLVSCPNYLFEILSWVAFSLGTSMLTSWGFTFAGLVQMAEWAVKKHKNYIKTDPSVRNKKAMLPFLL</sequence>
<dbReference type="EC" id="1.3.1.-" evidence="1"/>
<dbReference type="EMBL" id="AC105379">
    <property type="protein sequence ID" value="AAX80213.1"/>
    <property type="molecule type" value="Genomic_DNA"/>
</dbReference>
<dbReference type="EMBL" id="CP000066">
    <property type="protein sequence ID" value="AAZ10219.1"/>
    <property type="molecule type" value="Genomic_DNA"/>
</dbReference>
<dbReference type="RefSeq" id="XP_843778.1">
    <property type="nucleotide sequence ID" value="XM_838685.1"/>
</dbReference>
<dbReference type="SMR" id="Q57ZC7"/>
<dbReference type="FunCoup" id="Q57ZC7">
    <property type="interactions" value="43"/>
</dbReference>
<dbReference type="STRING" id="185431.Q57ZC7"/>
<dbReference type="PaxDb" id="5691-AAZ10219"/>
<dbReference type="GeneID" id="3656122"/>
<dbReference type="KEGG" id="tbr:Tb927.3.1840"/>
<dbReference type="VEuPathDB" id="TriTrypDB:Tb927.3.1840"/>
<dbReference type="eggNOG" id="KOG1639">
    <property type="taxonomic scope" value="Eukaryota"/>
</dbReference>
<dbReference type="InParanoid" id="Q57ZC7"/>
<dbReference type="OMA" id="ATMPIFN"/>
<dbReference type="OrthoDB" id="540503at2759"/>
<dbReference type="UniPathway" id="UPA00094"/>
<dbReference type="Proteomes" id="UP000008524">
    <property type="component" value="Chromosome 3"/>
</dbReference>
<dbReference type="GO" id="GO:0005737">
    <property type="term" value="C:cytoplasm"/>
    <property type="evidence" value="ECO:0000314"/>
    <property type="project" value="GeneDB"/>
</dbReference>
<dbReference type="GO" id="GO:0020015">
    <property type="term" value="C:glycosome"/>
    <property type="evidence" value="ECO:0000314"/>
    <property type="project" value="GeneDB"/>
</dbReference>
<dbReference type="GO" id="GO:0005741">
    <property type="term" value="C:mitochondrial outer membrane"/>
    <property type="evidence" value="ECO:0000314"/>
    <property type="project" value="GeneDB"/>
</dbReference>
<dbReference type="GO" id="GO:0016491">
    <property type="term" value="F:oxidoreductase activity"/>
    <property type="evidence" value="ECO:0000318"/>
    <property type="project" value="GO_Central"/>
</dbReference>
<dbReference type="GO" id="GO:0016627">
    <property type="term" value="F:oxidoreductase activity, acting on the CH-CH group of donors"/>
    <property type="evidence" value="ECO:0007669"/>
    <property type="project" value="InterPro"/>
</dbReference>
<dbReference type="GO" id="GO:0042761">
    <property type="term" value="P:very long-chain fatty acid biosynthetic process"/>
    <property type="evidence" value="ECO:0000318"/>
    <property type="project" value="GO_Central"/>
</dbReference>
<dbReference type="InterPro" id="IPR001104">
    <property type="entry name" value="3-oxo-5_a-steroid_4-DH_C"/>
</dbReference>
<dbReference type="InterPro" id="IPR039357">
    <property type="entry name" value="SRD5A/TECR"/>
</dbReference>
<dbReference type="PANTHER" id="PTHR10556">
    <property type="entry name" value="3-OXO-5-ALPHA-STEROID 4-DEHYDROGENASE"/>
    <property type="match status" value="1"/>
</dbReference>
<dbReference type="PANTHER" id="PTHR10556:SF28">
    <property type="entry name" value="VERY-LONG-CHAIN ENOYL-COA REDUCTASE"/>
    <property type="match status" value="1"/>
</dbReference>
<dbReference type="Pfam" id="PF02544">
    <property type="entry name" value="Steroid_dh"/>
    <property type="match status" value="1"/>
</dbReference>
<dbReference type="PROSITE" id="PS50244">
    <property type="entry name" value="S5A_REDUCTASE"/>
    <property type="match status" value="1"/>
</dbReference>
<organism evidence="8">
    <name type="scientific">Trypanosoma brucei brucei (strain 927/4 GUTat10.1)</name>
    <dbReference type="NCBI Taxonomy" id="185431"/>
    <lineage>
        <taxon>Eukaryota</taxon>
        <taxon>Discoba</taxon>
        <taxon>Euglenozoa</taxon>
        <taxon>Kinetoplastea</taxon>
        <taxon>Metakinetoplastina</taxon>
        <taxon>Trypanosomatida</taxon>
        <taxon>Trypanosomatidae</taxon>
        <taxon>Trypanosoma</taxon>
    </lineage>
</organism>
<evidence type="ECO:0000250" key="1">
    <source>
        <dbReference type="UniProtKB" id="Q9NZ01"/>
    </source>
</evidence>
<evidence type="ECO:0000255" key="2"/>
<evidence type="ECO:0000269" key="3">
    <source>
    </source>
</evidence>
<evidence type="ECO:0000303" key="4">
    <source>
    </source>
</evidence>
<evidence type="ECO:0000305" key="5"/>
<evidence type="ECO:0000312" key="6">
    <source>
        <dbReference type="EMBL" id="AAX80213.1"/>
    </source>
</evidence>
<evidence type="ECO:0000312" key="7">
    <source>
        <dbReference type="EMBL" id="AAZ10219.1"/>
    </source>
</evidence>
<evidence type="ECO:0000312" key="8">
    <source>
        <dbReference type="Proteomes" id="UP000008524"/>
    </source>
</evidence>
<proteinExistence type="inferred from homology"/>
<protein>
    <recommendedName>
        <fullName evidence="4">Putative enoyl-CoA reductase</fullName>
    </recommendedName>
    <alternativeName>
        <fullName evidence="6">Putative 3-oxo-5-alpha-steroid 4-dehydrogenase</fullName>
        <ecNumber evidence="1">1.3.1.-</ecNumber>
    </alternativeName>
</protein>
<keyword id="KW-0275">Fatty acid biosynthesis</keyword>
<keyword id="KW-0276">Fatty acid metabolism</keyword>
<keyword id="KW-0444">Lipid biosynthesis</keyword>
<keyword id="KW-0443">Lipid metabolism</keyword>
<keyword id="KW-0472">Membrane</keyword>
<keyword id="KW-0560">Oxidoreductase</keyword>
<keyword id="KW-1185">Reference proteome</keyword>
<keyword id="KW-0812">Transmembrane</keyword>
<keyword id="KW-1133">Transmembrane helix</keyword>
<comment type="function">
    <text evidence="3">Involved in the synthesis of fatty acids.</text>
</comment>
<comment type="pathway">
    <text evidence="3">Lipid metabolism; fatty acid biosynthesis.</text>
</comment>
<comment type="subcellular location">
    <subcellularLocation>
        <location evidence="2">Membrane</location>
        <topology evidence="2">Multi-pass membrane protein</topology>
    </subcellularLocation>
</comment>
<comment type="disruption phenotype">
    <text evidence="3">RNAi-mediated knockdown in tsetse fly procyclic form parasites results in growth defects in low-lipid medium and reduced fatty acid synthesis.</text>
</comment>
<comment type="similarity">
    <text evidence="5">Belongs to the steroid 5-alpha reductase family.</text>
</comment>